<dbReference type="EMBL" id="AK297472">
    <property type="protein sequence ID" value="BAG59893.1"/>
    <property type="molecule type" value="mRNA"/>
</dbReference>
<dbReference type="EMBL" id="AL834510">
    <property type="protein sequence ID" value="CAD39166.1"/>
    <property type="molecule type" value="mRNA"/>
</dbReference>
<dbReference type="EMBL" id="AACC02000041">
    <property type="protein sequence ID" value="EAL24426.1"/>
    <property type="molecule type" value="Genomic_DNA"/>
</dbReference>
<dbReference type="EMBL" id="AC073422">
    <property type="status" value="NOT_ANNOTATED_CDS"/>
    <property type="molecule type" value="Genomic_DNA"/>
</dbReference>
<dbReference type="EMBL" id="BC128392">
    <property type="protein sequence ID" value="AAI28393.1"/>
    <property type="molecule type" value="mRNA"/>
</dbReference>
<dbReference type="CCDS" id="CCDS47738.1">
    <molecule id="Q8N393-1"/>
</dbReference>
<dbReference type="RefSeq" id="NP_689624.2">
    <molecule id="Q8N393-1"/>
    <property type="nucleotide sequence ID" value="NM_152411.4"/>
</dbReference>
<dbReference type="SMR" id="Q8N393"/>
<dbReference type="BioGRID" id="126445">
    <property type="interactions" value="22"/>
</dbReference>
<dbReference type="FunCoup" id="Q8N393">
    <property type="interactions" value="594"/>
</dbReference>
<dbReference type="IntAct" id="Q8N393">
    <property type="interactions" value="18"/>
</dbReference>
<dbReference type="STRING" id="9606.ENSP00000417470"/>
<dbReference type="GlyGen" id="Q8N393">
    <property type="glycosylation" value="1 site, 1 O-linked glycan (1 site)"/>
</dbReference>
<dbReference type="iPTMnet" id="Q8N393"/>
<dbReference type="PhosphoSitePlus" id="Q8N393"/>
<dbReference type="BioMuta" id="ZNF786"/>
<dbReference type="DMDM" id="296453058"/>
<dbReference type="MassIVE" id="Q8N393"/>
<dbReference type="PaxDb" id="9606-ENSP00000417470"/>
<dbReference type="PeptideAtlas" id="Q8N393"/>
<dbReference type="ProteomicsDB" id="4612"/>
<dbReference type="ProteomicsDB" id="71781">
    <molecule id="Q8N393-1"/>
</dbReference>
<dbReference type="Antibodypedia" id="32776">
    <property type="antibodies" value="124 antibodies from 23 providers"/>
</dbReference>
<dbReference type="DNASU" id="136051"/>
<dbReference type="Ensembl" id="ENST00000491431.2">
    <molecule id="Q8N393-1"/>
    <property type="protein sequence ID" value="ENSP00000417470.1"/>
    <property type="gene ID" value="ENSG00000197362.15"/>
</dbReference>
<dbReference type="GeneID" id="136051"/>
<dbReference type="KEGG" id="hsa:136051"/>
<dbReference type="MANE-Select" id="ENST00000491431.2">
    <property type="protein sequence ID" value="ENSP00000417470.1"/>
    <property type="RefSeq nucleotide sequence ID" value="NM_152411.4"/>
    <property type="RefSeq protein sequence ID" value="NP_689624.2"/>
</dbReference>
<dbReference type="UCSC" id="uc003wfh.3">
    <molecule id="Q8N393-1"/>
    <property type="organism name" value="human"/>
</dbReference>
<dbReference type="AGR" id="HGNC:21806"/>
<dbReference type="CTD" id="136051"/>
<dbReference type="DisGeNET" id="136051"/>
<dbReference type="GeneCards" id="ZNF786"/>
<dbReference type="HGNC" id="HGNC:21806">
    <property type="gene designation" value="ZNF786"/>
</dbReference>
<dbReference type="HPA" id="ENSG00000197362">
    <property type="expression patterns" value="Low tissue specificity"/>
</dbReference>
<dbReference type="neXtProt" id="NX_Q8N393"/>
<dbReference type="OpenTargets" id="ENSG00000197362"/>
<dbReference type="PharmGKB" id="PA162410468"/>
<dbReference type="VEuPathDB" id="HostDB:ENSG00000197362"/>
<dbReference type="eggNOG" id="KOG1721">
    <property type="taxonomic scope" value="Eukaryota"/>
</dbReference>
<dbReference type="GeneTree" id="ENSGT00940000162604"/>
<dbReference type="HOGENOM" id="CLU_002678_17_1_1"/>
<dbReference type="InParanoid" id="Q8N393"/>
<dbReference type="OMA" id="TKSCRAP"/>
<dbReference type="OrthoDB" id="4748970at2759"/>
<dbReference type="PAN-GO" id="Q8N393">
    <property type="GO annotations" value="4 GO annotations based on evolutionary models"/>
</dbReference>
<dbReference type="PhylomeDB" id="Q8N393"/>
<dbReference type="TreeFam" id="TF326846"/>
<dbReference type="PathwayCommons" id="Q8N393"/>
<dbReference type="Reactome" id="R-HSA-212436">
    <property type="pathway name" value="Generic Transcription Pathway"/>
</dbReference>
<dbReference type="SignaLink" id="Q8N393"/>
<dbReference type="BioGRID-ORCS" id="136051">
    <property type="hits" value="18 hits in 1180 CRISPR screens"/>
</dbReference>
<dbReference type="ChiTaRS" id="ZNF786">
    <property type="organism name" value="human"/>
</dbReference>
<dbReference type="GenomeRNAi" id="136051"/>
<dbReference type="Pharos" id="Q8N393">
    <property type="development level" value="Tdark"/>
</dbReference>
<dbReference type="PRO" id="PR:Q8N393"/>
<dbReference type="Proteomes" id="UP000005640">
    <property type="component" value="Chromosome 7"/>
</dbReference>
<dbReference type="RNAct" id="Q8N393">
    <property type="molecule type" value="protein"/>
</dbReference>
<dbReference type="Bgee" id="ENSG00000197362">
    <property type="expression patterns" value="Expressed in upper arm skin and 174 other cell types or tissues"/>
</dbReference>
<dbReference type="ExpressionAtlas" id="Q8N393">
    <property type="expression patterns" value="baseline and differential"/>
</dbReference>
<dbReference type="GO" id="GO:0005634">
    <property type="term" value="C:nucleus"/>
    <property type="evidence" value="ECO:0000314"/>
    <property type="project" value="LIFEdb"/>
</dbReference>
<dbReference type="GO" id="GO:0003677">
    <property type="term" value="F:DNA binding"/>
    <property type="evidence" value="ECO:0007669"/>
    <property type="project" value="UniProtKB-KW"/>
</dbReference>
<dbReference type="GO" id="GO:0008270">
    <property type="term" value="F:zinc ion binding"/>
    <property type="evidence" value="ECO:0007669"/>
    <property type="project" value="UniProtKB-KW"/>
</dbReference>
<dbReference type="GO" id="GO:0006357">
    <property type="term" value="P:regulation of transcription by RNA polymerase II"/>
    <property type="evidence" value="ECO:0000318"/>
    <property type="project" value="GO_Central"/>
</dbReference>
<dbReference type="CDD" id="cd07765">
    <property type="entry name" value="KRAB_A-box"/>
    <property type="match status" value="1"/>
</dbReference>
<dbReference type="FunFam" id="3.30.160.60:FF:000100">
    <property type="entry name" value="Zinc finger 45-like"/>
    <property type="match status" value="1"/>
</dbReference>
<dbReference type="FunFam" id="3.30.160.60:FF:000151">
    <property type="entry name" value="Zinc finger and SCAN domain-containing 21"/>
    <property type="match status" value="2"/>
</dbReference>
<dbReference type="FunFam" id="3.30.160.60:FF:000212">
    <property type="entry name" value="zinc finger protein 382 isoform X2"/>
    <property type="match status" value="1"/>
</dbReference>
<dbReference type="FunFam" id="3.30.160.60:FF:001064">
    <property type="entry name" value="Zinc finger protein 425"/>
    <property type="match status" value="1"/>
</dbReference>
<dbReference type="FunFam" id="3.30.160.60:FF:001385">
    <property type="entry name" value="zinc finger protein 774"/>
    <property type="match status" value="1"/>
</dbReference>
<dbReference type="FunFam" id="3.30.160.60:FF:000562">
    <property type="entry name" value="Zinc finger protein 786"/>
    <property type="match status" value="4"/>
</dbReference>
<dbReference type="FunFam" id="3.30.160.60:FF:001892">
    <property type="entry name" value="Zinc finger protein 786"/>
    <property type="match status" value="1"/>
</dbReference>
<dbReference type="FunFam" id="3.30.160.60:FF:002002">
    <property type="entry name" value="Zinc finger protein 786"/>
    <property type="match status" value="1"/>
</dbReference>
<dbReference type="FunFam" id="3.30.160.60:FF:002174">
    <property type="entry name" value="Zinc finger protein 786"/>
    <property type="match status" value="1"/>
</dbReference>
<dbReference type="FunFam" id="3.30.160.60:FF:002741">
    <property type="entry name" value="Zinc finger protein 786"/>
    <property type="match status" value="1"/>
</dbReference>
<dbReference type="Gene3D" id="6.10.140.140">
    <property type="match status" value="1"/>
</dbReference>
<dbReference type="Gene3D" id="3.30.160.60">
    <property type="entry name" value="Classic Zinc Finger"/>
    <property type="match status" value="14"/>
</dbReference>
<dbReference type="InterPro" id="IPR050636">
    <property type="entry name" value="C2H2-ZF_domain-containing"/>
</dbReference>
<dbReference type="InterPro" id="IPR001909">
    <property type="entry name" value="KRAB"/>
</dbReference>
<dbReference type="InterPro" id="IPR036051">
    <property type="entry name" value="KRAB_dom_sf"/>
</dbReference>
<dbReference type="InterPro" id="IPR036236">
    <property type="entry name" value="Znf_C2H2_sf"/>
</dbReference>
<dbReference type="InterPro" id="IPR013087">
    <property type="entry name" value="Znf_C2H2_type"/>
</dbReference>
<dbReference type="PANTHER" id="PTHR47772:SF11">
    <property type="entry name" value="C2H2-TYPE DOMAIN-CONTAINING PROTEIN"/>
    <property type="match status" value="1"/>
</dbReference>
<dbReference type="PANTHER" id="PTHR47772">
    <property type="entry name" value="ZINC FINGER PROTEIN 200"/>
    <property type="match status" value="1"/>
</dbReference>
<dbReference type="Pfam" id="PF01352">
    <property type="entry name" value="KRAB"/>
    <property type="match status" value="1"/>
</dbReference>
<dbReference type="Pfam" id="PF00096">
    <property type="entry name" value="zf-C2H2"/>
    <property type="match status" value="11"/>
</dbReference>
<dbReference type="SMART" id="SM00349">
    <property type="entry name" value="KRAB"/>
    <property type="match status" value="1"/>
</dbReference>
<dbReference type="SMART" id="SM00355">
    <property type="entry name" value="ZnF_C2H2"/>
    <property type="match status" value="15"/>
</dbReference>
<dbReference type="SUPFAM" id="SSF57667">
    <property type="entry name" value="beta-beta-alpha zinc fingers"/>
    <property type="match status" value="9"/>
</dbReference>
<dbReference type="SUPFAM" id="SSF109640">
    <property type="entry name" value="KRAB domain (Kruppel-associated box)"/>
    <property type="match status" value="1"/>
</dbReference>
<dbReference type="PROSITE" id="PS50805">
    <property type="entry name" value="KRAB"/>
    <property type="match status" value="1"/>
</dbReference>
<dbReference type="PROSITE" id="PS00028">
    <property type="entry name" value="ZINC_FINGER_C2H2_1"/>
    <property type="match status" value="13"/>
</dbReference>
<dbReference type="PROSITE" id="PS50157">
    <property type="entry name" value="ZINC_FINGER_C2H2_2"/>
    <property type="match status" value="15"/>
</dbReference>
<name>ZN786_HUMAN</name>
<keyword id="KW-0025">Alternative splicing</keyword>
<keyword id="KW-0238">DNA-binding</keyword>
<keyword id="KW-0479">Metal-binding</keyword>
<keyword id="KW-0539">Nucleus</keyword>
<keyword id="KW-1267">Proteomics identification</keyword>
<keyword id="KW-1185">Reference proteome</keyword>
<keyword id="KW-0677">Repeat</keyword>
<keyword id="KW-0804">Transcription</keyword>
<keyword id="KW-0805">Transcription regulation</keyword>
<keyword id="KW-0862">Zinc</keyword>
<keyword id="KW-0863">Zinc-finger</keyword>
<organism>
    <name type="scientific">Homo sapiens</name>
    <name type="common">Human</name>
    <dbReference type="NCBI Taxonomy" id="9606"/>
    <lineage>
        <taxon>Eukaryota</taxon>
        <taxon>Metazoa</taxon>
        <taxon>Chordata</taxon>
        <taxon>Craniata</taxon>
        <taxon>Vertebrata</taxon>
        <taxon>Euteleostomi</taxon>
        <taxon>Mammalia</taxon>
        <taxon>Eutheria</taxon>
        <taxon>Euarchontoglires</taxon>
        <taxon>Primates</taxon>
        <taxon>Haplorrhini</taxon>
        <taxon>Catarrhini</taxon>
        <taxon>Hominidae</taxon>
        <taxon>Homo</taxon>
    </lineage>
</organism>
<sequence>MAEPPRLPLTFEDVAIYFSEQEWQDLEAWQKELYKHVMRSNYETLVSLDDGLPKPELISWIEHGGEPFRKWRESQKSGNIICSSVDMHFDPGFEEQLFWGSQQAMNSGKTKSHFQLDPESQCSFGSFVSFRPDQGITLGSPQRHDARAPPPLACGPSESTLKEGIPGPRNLDLPGLWDVPAWESTQHPWPVCGESCWENNHLVMHQRGHSKDRTRRAWEKFNKRAETQMPWSSPRVQRHFRCGVCGKSFRRKLCLLRHLAAHTGRGPFRNADGEMCFRHELTHPSHRLPQQGEKPAQCTPCGKRSLPVDSTQARRCQHSREGPASWREGRGASSSVHSGQKPGSRLPQEGNSHQEGDTEALQHGAEGPCSCSECGERSPMSARLASPCRAHTGEKPFQCAHCTKRFRLRRLLQVHQHAHGGERPFSCRKCGKGFAKQCKLTEHIRVHSGEKPFRCAKCGRNFRQRGQLLRHQRLHTDEKPFQCPECGLSFRLESMLRAHRLRHGGERPFSCSECGRGFTHQCKLREHLRVHSGERPFQCLKCDKRFRLKGILKAHQHTHSKERPFSCGECGKGFTRQSKLTEHLRVHSGERPFQCPECNRSFRLKGQLLSHQRLHTGERPFQCPECDKRYRVKADMKAHQLLHSGEMPFSCECGKGFVKHSKLIEHIRTHTGEKPFQCPKCDKSFRLKAQLLSHQGLHTGERPFHCPECDKNFRERGHMLRHQRIHRPERPFACGDCGKGFIYKSKLAEHIRVHTKSCPAPNELDIKKRLSQLFAMIEADWS</sequence>
<feature type="chain" id="PRO_0000293694" description="Zinc finger protein 786">
    <location>
        <begin position="1"/>
        <end position="782"/>
    </location>
</feature>
<feature type="domain" description="KRAB" evidence="2">
    <location>
        <begin position="9"/>
        <end position="80"/>
    </location>
</feature>
<feature type="zinc finger region" description="C2H2-type 1; degenerate" evidence="1">
    <location>
        <begin position="192"/>
        <end position="209"/>
    </location>
</feature>
<feature type="zinc finger region" description="C2H2-type 2" evidence="1">
    <location>
        <begin position="240"/>
        <end position="262"/>
    </location>
</feature>
<feature type="zinc finger region" description="C2H2-type 3; degenerate" evidence="1">
    <location>
        <begin position="369"/>
        <end position="391"/>
    </location>
</feature>
<feature type="zinc finger region" description="C2H2-type 4" evidence="1">
    <location>
        <begin position="397"/>
        <end position="419"/>
    </location>
</feature>
<feature type="zinc finger region" description="C2H2-type 5" evidence="1">
    <location>
        <begin position="425"/>
        <end position="447"/>
    </location>
</feature>
<feature type="zinc finger region" description="C2H2-type 6" evidence="1">
    <location>
        <begin position="453"/>
        <end position="475"/>
    </location>
</feature>
<feature type="zinc finger region" description="C2H2-type 7; degenerate" evidence="1">
    <location>
        <begin position="481"/>
        <end position="503"/>
    </location>
</feature>
<feature type="zinc finger region" description="C2H2-type 8" evidence="1">
    <location>
        <begin position="509"/>
        <end position="531"/>
    </location>
</feature>
<feature type="zinc finger region" description="C2H2-type 9" evidence="1">
    <location>
        <begin position="537"/>
        <end position="559"/>
    </location>
</feature>
<feature type="zinc finger region" description="C2H2-type 10" evidence="1">
    <location>
        <begin position="565"/>
        <end position="587"/>
    </location>
</feature>
<feature type="zinc finger region" description="C2H2-type 11" evidence="1">
    <location>
        <begin position="593"/>
        <end position="615"/>
    </location>
</feature>
<feature type="zinc finger region" description="C2H2-type 12" evidence="1">
    <location>
        <begin position="621"/>
        <end position="643"/>
    </location>
</feature>
<feature type="zinc finger region" description="C2H2-type 13" evidence="1">
    <location>
        <begin position="649"/>
        <end position="670"/>
    </location>
</feature>
<feature type="zinc finger region" description="C2H2-type 14" evidence="1">
    <location>
        <begin position="676"/>
        <end position="698"/>
    </location>
</feature>
<feature type="zinc finger region" description="C2H2-type 15" evidence="1">
    <location>
        <begin position="704"/>
        <end position="726"/>
    </location>
</feature>
<feature type="zinc finger region" description="C2H2-type 16" evidence="1">
    <location>
        <begin position="732"/>
        <end position="754"/>
    </location>
</feature>
<feature type="region of interest" description="Disordered" evidence="3">
    <location>
        <begin position="141"/>
        <end position="164"/>
    </location>
</feature>
<feature type="region of interest" description="Disordered" evidence="3">
    <location>
        <begin position="285"/>
        <end position="364"/>
    </location>
</feature>
<feature type="splice variant" id="VSP_055971" description="In isoform 2." evidence="4">
    <location>
        <begin position="1"/>
        <end position="37"/>
    </location>
</feature>
<feature type="sequence conflict" description="In Ref. 2; CAD39166." evidence="5" ref="2">
    <original>H</original>
    <variation>Q</variation>
    <location>
        <position position="503"/>
    </location>
</feature>
<feature type="sequence conflict" description="In Ref. 2; CAD39166." evidence="5" ref="2">
    <original>R</original>
    <variation>W</variation>
    <location>
        <position position="714"/>
    </location>
</feature>
<evidence type="ECO:0000255" key="1">
    <source>
        <dbReference type="PROSITE-ProRule" id="PRU00042"/>
    </source>
</evidence>
<evidence type="ECO:0000255" key="2">
    <source>
        <dbReference type="PROSITE-ProRule" id="PRU00119"/>
    </source>
</evidence>
<evidence type="ECO:0000256" key="3">
    <source>
        <dbReference type="SAM" id="MobiDB-lite"/>
    </source>
</evidence>
<evidence type="ECO:0000303" key="4">
    <source>
    </source>
</evidence>
<evidence type="ECO:0000305" key="5"/>
<gene>
    <name type="primary">ZNF786</name>
</gene>
<protein>
    <recommendedName>
        <fullName>Zinc finger protein 786</fullName>
    </recommendedName>
</protein>
<proteinExistence type="evidence at protein level"/>
<reference key="1">
    <citation type="journal article" date="2004" name="Nat. Genet.">
        <title>Complete sequencing and characterization of 21,243 full-length human cDNAs.</title>
        <authorList>
            <person name="Ota T."/>
            <person name="Suzuki Y."/>
            <person name="Nishikawa T."/>
            <person name="Otsuki T."/>
            <person name="Sugiyama T."/>
            <person name="Irie R."/>
            <person name="Wakamatsu A."/>
            <person name="Hayashi K."/>
            <person name="Sato H."/>
            <person name="Nagai K."/>
            <person name="Kimura K."/>
            <person name="Makita H."/>
            <person name="Sekine M."/>
            <person name="Obayashi M."/>
            <person name="Nishi T."/>
            <person name="Shibahara T."/>
            <person name="Tanaka T."/>
            <person name="Ishii S."/>
            <person name="Yamamoto J."/>
            <person name="Saito K."/>
            <person name="Kawai Y."/>
            <person name="Isono Y."/>
            <person name="Nakamura Y."/>
            <person name="Nagahari K."/>
            <person name="Murakami K."/>
            <person name="Yasuda T."/>
            <person name="Iwayanagi T."/>
            <person name="Wagatsuma M."/>
            <person name="Shiratori A."/>
            <person name="Sudo H."/>
            <person name="Hosoiri T."/>
            <person name="Kaku Y."/>
            <person name="Kodaira H."/>
            <person name="Kondo H."/>
            <person name="Sugawara M."/>
            <person name="Takahashi M."/>
            <person name="Kanda K."/>
            <person name="Yokoi T."/>
            <person name="Furuya T."/>
            <person name="Kikkawa E."/>
            <person name="Omura Y."/>
            <person name="Abe K."/>
            <person name="Kamihara K."/>
            <person name="Katsuta N."/>
            <person name="Sato K."/>
            <person name="Tanikawa M."/>
            <person name="Yamazaki M."/>
            <person name="Ninomiya K."/>
            <person name="Ishibashi T."/>
            <person name="Yamashita H."/>
            <person name="Murakawa K."/>
            <person name="Fujimori K."/>
            <person name="Tanai H."/>
            <person name="Kimata M."/>
            <person name="Watanabe M."/>
            <person name="Hiraoka S."/>
            <person name="Chiba Y."/>
            <person name="Ishida S."/>
            <person name="Ono Y."/>
            <person name="Takiguchi S."/>
            <person name="Watanabe S."/>
            <person name="Yosida M."/>
            <person name="Hotuta T."/>
            <person name="Kusano J."/>
            <person name="Kanehori K."/>
            <person name="Takahashi-Fujii A."/>
            <person name="Hara H."/>
            <person name="Tanase T.-O."/>
            <person name="Nomura Y."/>
            <person name="Togiya S."/>
            <person name="Komai F."/>
            <person name="Hara R."/>
            <person name="Takeuchi K."/>
            <person name="Arita M."/>
            <person name="Imose N."/>
            <person name="Musashino K."/>
            <person name="Yuuki H."/>
            <person name="Oshima A."/>
            <person name="Sasaki N."/>
            <person name="Aotsuka S."/>
            <person name="Yoshikawa Y."/>
            <person name="Matsunawa H."/>
            <person name="Ichihara T."/>
            <person name="Shiohata N."/>
            <person name="Sano S."/>
            <person name="Moriya S."/>
            <person name="Momiyama H."/>
            <person name="Satoh N."/>
            <person name="Takami S."/>
            <person name="Terashima Y."/>
            <person name="Suzuki O."/>
            <person name="Nakagawa S."/>
            <person name="Senoh A."/>
            <person name="Mizoguchi H."/>
            <person name="Goto Y."/>
            <person name="Shimizu F."/>
            <person name="Wakebe H."/>
            <person name="Hishigaki H."/>
            <person name="Watanabe T."/>
            <person name="Sugiyama A."/>
            <person name="Takemoto M."/>
            <person name="Kawakami B."/>
            <person name="Yamazaki M."/>
            <person name="Watanabe K."/>
            <person name="Kumagai A."/>
            <person name="Itakura S."/>
            <person name="Fukuzumi Y."/>
            <person name="Fujimori Y."/>
            <person name="Komiyama M."/>
            <person name="Tashiro H."/>
            <person name="Tanigami A."/>
            <person name="Fujiwara T."/>
            <person name="Ono T."/>
            <person name="Yamada K."/>
            <person name="Fujii Y."/>
            <person name="Ozaki K."/>
            <person name="Hirao M."/>
            <person name="Ohmori Y."/>
            <person name="Kawabata A."/>
            <person name="Hikiji T."/>
            <person name="Kobatake N."/>
            <person name="Inagaki H."/>
            <person name="Ikema Y."/>
            <person name="Okamoto S."/>
            <person name="Okitani R."/>
            <person name="Kawakami T."/>
            <person name="Noguchi S."/>
            <person name="Itoh T."/>
            <person name="Shigeta K."/>
            <person name="Senba T."/>
            <person name="Matsumura K."/>
            <person name="Nakajima Y."/>
            <person name="Mizuno T."/>
            <person name="Morinaga M."/>
            <person name="Sasaki M."/>
            <person name="Togashi T."/>
            <person name="Oyama M."/>
            <person name="Hata H."/>
            <person name="Watanabe M."/>
            <person name="Komatsu T."/>
            <person name="Mizushima-Sugano J."/>
            <person name="Satoh T."/>
            <person name="Shirai Y."/>
            <person name="Takahashi Y."/>
            <person name="Nakagawa K."/>
            <person name="Okumura K."/>
            <person name="Nagase T."/>
            <person name="Nomura N."/>
            <person name="Kikuchi H."/>
            <person name="Masuho Y."/>
            <person name="Yamashita R."/>
            <person name="Nakai K."/>
            <person name="Yada T."/>
            <person name="Nakamura Y."/>
            <person name="Ohara O."/>
            <person name="Isogai T."/>
            <person name="Sugano S."/>
        </authorList>
    </citation>
    <scope>NUCLEOTIDE SEQUENCE [LARGE SCALE MRNA] (ISOFORM 2)</scope>
    <source>
        <tissue>Brain</tissue>
    </source>
</reference>
<reference key="2">
    <citation type="journal article" date="2007" name="BMC Genomics">
        <title>The full-ORF clone resource of the German cDNA consortium.</title>
        <authorList>
            <person name="Bechtel S."/>
            <person name="Rosenfelder H."/>
            <person name="Duda A."/>
            <person name="Schmidt C.P."/>
            <person name="Ernst U."/>
            <person name="Wellenreuther R."/>
            <person name="Mehrle A."/>
            <person name="Schuster C."/>
            <person name="Bahr A."/>
            <person name="Bloecker H."/>
            <person name="Heubner D."/>
            <person name="Hoerlein A."/>
            <person name="Michel G."/>
            <person name="Wedler H."/>
            <person name="Koehrer K."/>
            <person name="Ottenwaelder B."/>
            <person name="Poustka A."/>
            <person name="Wiemann S."/>
            <person name="Schupp I."/>
        </authorList>
    </citation>
    <scope>NUCLEOTIDE SEQUENCE [LARGE SCALE MRNA] (ISOFORM 1)</scope>
    <source>
        <tissue>Melanoma</tissue>
    </source>
</reference>
<reference key="3">
    <citation type="journal article" date="2003" name="Nature">
        <title>The DNA sequence of human chromosome 7.</title>
        <authorList>
            <person name="Hillier L.W."/>
            <person name="Fulton R.S."/>
            <person name="Fulton L.A."/>
            <person name="Graves T.A."/>
            <person name="Pepin K.H."/>
            <person name="Wagner-McPherson C."/>
            <person name="Layman D."/>
            <person name="Maas J."/>
            <person name="Jaeger S."/>
            <person name="Walker R."/>
            <person name="Wylie K."/>
            <person name="Sekhon M."/>
            <person name="Becker M.C."/>
            <person name="O'Laughlin M.D."/>
            <person name="Schaller M.E."/>
            <person name="Fewell G.A."/>
            <person name="Delehaunty K.D."/>
            <person name="Miner T.L."/>
            <person name="Nash W.E."/>
            <person name="Cordes M."/>
            <person name="Du H."/>
            <person name="Sun H."/>
            <person name="Edwards J."/>
            <person name="Bradshaw-Cordum H."/>
            <person name="Ali J."/>
            <person name="Andrews S."/>
            <person name="Isak A."/>
            <person name="Vanbrunt A."/>
            <person name="Nguyen C."/>
            <person name="Du F."/>
            <person name="Lamar B."/>
            <person name="Courtney L."/>
            <person name="Kalicki J."/>
            <person name="Ozersky P."/>
            <person name="Bielicki L."/>
            <person name="Scott K."/>
            <person name="Holmes A."/>
            <person name="Harkins R."/>
            <person name="Harris A."/>
            <person name="Strong C.M."/>
            <person name="Hou S."/>
            <person name="Tomlinson C."/>
            <person name="Dauphin-Kohlberg S."/>
            <person name="Kozlowicz-Reilly A."/>
            <person name="Leonard S."/>
            <person name="Rohlfing T."/>
            <person name="Rock S.M."/>
            <person name="Tin-Wollam A.-M."/>
            <person name="Abbott A."/>
            <person name="Minx P."/>
            <person name="Maupin R."/>
            <person name="Strowmatt C."/>
            <person name="Latreille P."/>
            <person name="Miller N."/>
            <person name="Johnson D."/>
            <person name="Murray J."/>
            <person name="Woessner J.P."/>
            <person name="Wendl M.C."/>
            <person name="Yang S.-P."/>
            <person name="Schultz B.R."/>
            <person name="Wallis J.W."/>
            <person name="Spieth J."/>
            <person name="Bieri T.A."/>
            <person name="Nelson J.O."/>
            <person name="Berkowicz N."/>
            <person name="Wohldmann P.E."/>
            <person name="Cook L.L."/>
            <person name="Hickenbotham M.T."/>
            <person name="Eldred J."/>
            <person name="Williams D."/>
            <person name="Bedell J.A."/>
            <person name="Mardis E.R."/>
            <person name="Clifton S.W."/>
            <person name="Chissoe S.L."/>
            <person name="Marra M.A."/>
            <person name="Raymond C."/>
            <person name="Haugen E."/>
            <person name="Gillett W."/>
            <person name="Zhou Y."/>
            <person name="James R."/>
            <person name="Phelps K."/>
            <person name="Iadanoto S."/>
            <person name="Bubb K."/>
            <person name="Simms E."/>
            <person name="Levy R."/>
            <person name="Clendenning J."/>
            <person name="Kaul R."/>
            <person name="Kent W.J."/>
            <person name="Furey T.S."/>
            <person name="Baertsch R.A."/>
            <person name="Brent M.R."/>
            <person name="Keibler E."/>
            <person name="Flicek P."/>
            <person name="Bork P."/>
            <person name="Suyama M."/>
            <person name="Bailey J.A."/>
            <person name="Portnoy M.E."/>
            <person name="Torrents D."/>
            <person name="Chinwalla A.T."/>
            <person name="Gish W.R."/>
            <person name="Eddy S.R."/>
            <person name="McPherson J.D."/>
            <person name="Olson M.V."/>
            <person name="Eichler E.E."/>
            <person name="Green E.D."/>
            <person name="Waterston R.H."/>
            <person name="Wilson R.K."/>
        </authorList>
    </citation>
    <scope>NUCLEOTIDE SEQUENCE [LARGE SCALE GENOMIC DNA]</scope>
</reference>
<reference key="4">
    <citation type="journal article" date="2004" name="Genome Res.">
        <title>The status, quality, and expansion of the NIH full-length cDNA project: the Mammalian Gene Collection (MGC).</title>
        <authorList>
            <consortium name="The MGC Project Team"/>
        </authorList>
    </citation>
    <scope>NUCLEOTIDE SEQUENCE [LARGE SCALE MRNA] (ISOFORM 1)</scope>
</reference>
<comment type="function">
    <text>May be involved in transcriptional regulation.</text>
</comment>
<comment type="interaction">
    <interactant intactId="EBI-10265203">
        <id>Q8N393</id>
    </interactant>
    <interactant intactId="EBI-748961">
        <id>O95273</id>
        <label>CCNDBP1</label>
    </interactant>
    <organismsDiffer>false</organismsDiffer>
    <experiments>3</experiments>
</comment>
<comment type="interaction">
    <interactant intactId="EBI-10265203">
        <id>Q8N393</id>
    </interactant>
    <interactant intactId="EBI-3867333">
        <id>A8MQ03</id>
        <label>CYSRT1</label>
    </interactant>
    <organismsDiffer>false</organismsDiffer>
    <experiments>4</experiments>
</comment>
<comment type="interaction">
    <interactant intactId="EBI-10265203">
        <id>Q8N393</id>
    </interactant>
    <interactant intactId="EBI-11959885">
        <id>Q07627</id>
        <label>KRTAP1-1</label>
    </interactant>
    <organismsDiffer>false</organismsDiffer>
    <experiments>3</experiments>
</comment>
<comment type="interaction">
    <interactant intactId="EBI-10265203">
        <id>Q8N393</id>
    </interactant>
    <interactant intactId="EBI-11749135">
        <id>Q8IUG1</id>
        <label>KRTAP1-3</label>
    </interactant>
    <organismsDiffer>false</organismsDiffer>
    <experiments>3</experiments>
</comment>
<comment type="interaction">
    <interactant intactId="EBI-10265203">
        <id>Q8N393</id>
    </interactant>
    <interactant intactId="EBI-10172290">
        <id>P60409</id>
        <label>KRTAP10-7</label>
    </interactant>
    <organismsDiffer>false</organismsDiffer>
    <experiments>3</experiments>
</comment>
<comment type="interaction">
    <interactant intactId="EBI-10265203">
        <id>Q8N393</id>
    </interactant>
    <interactant intactId="EBI-10171774">
        <id>P60410</id>
        <label>KRTAP10-8</label>
    </interactant>
    <organismsDiffer>false</organismsDiffer>
    <experiments>3</experiments>
</comment>
<comment type="interaction">
    <interactant intactId="EBI-10265203">
        <id>Q8N393</id>
    </interactant>
    <interactant intactId="EBI-14065470">
        <id>Q9BYR9</id>
        <label>KRTAP2-4</label>
    </interactant>
    <organismsDiffer>false</organismsDiffer>
    <experiments>3</experiments>
</comment>
<comment type="interaction">
    <interactant intactId="EBI-10265203">
        <id>Q8N393</id>
    </interactant>
    <interactant intactId="EBI-724076">
        <id>Q99750</id>
        <label>MDFI</label>
    </interactant>
    <organismsDiffer>false</organismsDiffer>
    <experiments>3</experiments>
</comment>
<comment type="interaction">
    <interactant intactId="EBI-10265203">
        <id>Q8N393</id>
    </interactant>
    <interactant intactId="EBI-22310682">
        <id>P0DPK4</id>
        <label>NOTCH2NLC</label>
    </interactant>
    <organismsDiffer>false</organismsDiffer>
    <experiments>3</experiments>
</comment>
<comment type="subcellular location">
    <subcellularLocation>
        <location evidence="5">Nucleus</location>
    </subcellularLocation>
</comment>
<comment type="alternative products">
    <event type="alternative splicing"/>
    <isoform>
        <id>Q8N393-1</id>
        <name>1</name>
        <sequence type="displayed"/>
    </isoform>
    <isoform>
        <id>Q8N393-2</id>
        <name>2</name>
        <sequence type="described" ref="VSP_055971"/>
    </isoform>
</comment>
<comment type="similarity">
    <text evidence="5">Belongs to the krueppel C2H2-type zinc-finger protein family.</text>
</comment>
<accession>Q8N393</accession>
<accession>A1A568</accession>
<accession>B4DMI1</accession>